<name>RR14_CYAM1</name>
<proteinExistence type="inferred from homology"/>
<dbReference type="EMBL" id="AB002583">
    <property type="protein sequence ID" value="BAC76208.1"/>
    <property type="molecule type" value="Genomic_DNA"/>
</dbReference>
<dbReference type="RefSeq" id="NP_849046.1">
    <property type="nucleotide sequence ID" value="NC_004799.1"/>
</dbReference>
<dbReference type="SMR" id="Q85FY5"/>
<dbReference type="STRING" id="280699.Q85FY5"/>
<dbReference type="EnsemblPlants" id="CMV137CT">
    <property type="protein sequence ID" value="CMV137CT"/>
    <property type="gene ID" value="CMV137C"/>
</dbReference>
<dbReference type="GeneID" id="845003"/>
<dbReference type="Gramene" id="CMV137CT">
    <property type="protein sequence ID" value="CMV137CT"/>
    <property type="gene ID" value="CMV137C"/>
</dbReference>
<dbReference type="KEGG" id="cme:CymeCp114"/>
<dbReference type="eggNOG" id="KOG1741">
    <property type="taxonomic scope" value="Eukaryota"/>
</dbReference>
<dbReference type="HOGENOM" id="CLU_139869_0_1_1"/>
<dbReference type="Proteomes" id="UP000007014">
    <property type="component" value="Chloroplast"/>
</dbReference>
<dbReference type="GO" id="GO:0009507">
    <property type="term" value="C:chloroplast"/>
    <property type="evidence" value="ECO:0007669"/>
    <property type="project" value="UniProtKB-SubCell"/>
</dbReference>
<dbReference type="GO" id="GO:0015935">
    <property type="term" value="C:small ribosomal subunit"/>
    <property type="evidence" value="ECO:0007669"/>
    <property type="project" value="TreeGrafter"/>
</dbReference>
<dbReference type="GO" id="GO:0019843">
    <property type="term" value="F:rRNA binding"/>
    <property type="evidence" value="ECO:0007669"/>
    <property type="project" value="UniProtKB-UniRule"/>
</dbReference>
<dbReference type="GO" id="GO:0003735">
    <property type="term" value="F:structural constituent of ribosome"/>
    <property type="evidence" value="ECO:0007669"/>
    <property type="project" value="InterPro"/>
</dbReference>
<dbReference type="GO" id="GO:0006412">
    <property type="term" value="P:translation"/>
    <property type="evidence" value="ECO:0007669"/>
    <property type="project" value="UniProtKB-UniRule"/>
</dbReference>
<dbReference type="FunFam" id="1.10.287.1480:FF:000001">
    <property type="entry name" value="30S ribosomal protein S14"/>
    <property type="match status" value="1"/>
</dbReference>
<dbReference type="Gene3D" id="1.10.287.1480">
    <property type="match status" value="1"/>
</dbReference>
<dbReference type="HAMAP" id="MF_00537">
    <property type="entry name" value="Ribosomal_uS14_1"/>
    <property type="match status" value="1"/>
</dbReference>
<dbReference type="InterPro" id="IPR001209">
    <property type="entry name" value="Ribosomal_uS14"/>
</dbReference>
<dbReference type="InterPro" id="IPR023036">
    <property type="entry name" value="Ribosomal_uS14_bac/plastid"/>
</dbReference>
<dbReference type="InterPro" id="IPR018271">
    <property type="entry name" value="Ribosomal_uS14_CS"/>
</dbReference>
<dbReference type="NCBIfam" id="NF006477">
    <property type="entry name" value="PRK08881.1"/>
    <property type="match status" value="1"/>
</dbReference>
<dbReference type="PANTHER" id="PTHR19836">
    <property type="entry name" value="30S RIBOSOMAL PROTEIN S14"/>
    <property type="match status" value="1"/>
</dbReference>
<dbReference type="PANTHER" id="PTHR19836:SF19">
    <property type="entry name" value="SMALL RIBOSOMAL SUBUNIT PROTEIN US14M"/>
    <property type="match status" value="1"/>
</dbReference>
<dbReference type="Pfam" id="PF00253">
    <property type="entry name" value="Ribosomal_S14"/>
    <property type="match status" value="1"/>
</dbReference>
<dbReference type="SUPFAM" id="SSF57716">
    <property type="entry name" value="Glucocorticoid receptor-like (DNA-binding domain)"/>
    <property type="match status" value="1"/>
</dbReference>
<dbReference type="PROSITE" id="PS00527">
    <property type="entry name" value="RIBOSOMAL_S14"/>
    <property type="match status" value="1"/>
</dbReference>
<comment type="function">
    <text evidence="1">Binds 16S rRNA, required for the assembly of 30S particles.</text>
</comment>
<comment type="subunit">
    <text evidence="1">Part of the 30S ribosomal subunit.</text>
</comment>
<comment type="subcellular location">
    <subcellularLocation>
        <location>Plastid</location>
        <location>Chloroplast</location>
    </subcellularLocation>
</comment>
<comment type="similarity">
    <text evidence="1">Belongs to the universal ribosomal protein uS14 family.</text>
</comment>
<gene>
    <name evidence="1" type="primary">rps14</name>
</gene>
<keyword id="KW-0150">Chloroplast</keyword>
<keyword id="KW-0934">Plastid</keyword>
<keyword id="KW-1185">Reference proteome</keyword>
<keyword id="KW-0687">Ribonucleoprotein</keyword>
<keyword id="KW-0689">Ribosomal protein</keyword>
<keyword id="KW-0694">RNA-binding</keyword>
<keyword id="KW-0699">rRNA-binding</keyword>
<reference key="1">
    <citation type="journal article" date="2003" name="DNA Res.">
        <title>Complete sequence and analysis of the plastid genome of the unicellular red alga Cyanidioschyzon merolae.</title>
        <authorList>
            <person name="Ohta N."/>
            <person name="Matsuzaki M."/>
            <person name="Misumi O."/>
            <person name="Miyagishima S.-Y."/>
            <person name="Nozaki H."/>
            <person name="Tanaka K."/>
            <person name="Shin-i T."/>
            <person name="Kohara Y."/>
            <person name="Kuroiwa T."/>
        </authorList>
    </citation>
    <scope>NUCLEOTIDE SEQUENCE [LARGE SCALE GENOMIC DNA]</scope>
    <source>
        <strain>NIES-3377 / 10D</strain>
    </source>
</reference>
<geneLocation type="chloroplast"/>
<feature type="chain" id="PRO_0000276711" description="Small ribosomal subunit protein uS14c">
    <location>
        <begin position="1"/>
        <end position="100"/>
    </location>
</feature>
<protein>
    <recommendedName>
        <fullName evidence="1">Small ribosomal subunit protein uS14c</fullName>
    </recommendedName>
    <alternativeName>
        <fullName evidence="2">30S ribosomal protein S14, chloroplastic</fullName>
    </alternativeName>
</protein>
<evidence type="ECO:0000255" key="1">
    <source>
        <dbReference type="HAMAP-Rule" id="MF_00537"/>
    </source>
</evidence>
<evidence type="ECO:0000305" key="2"/>
<organism>
    <name type="scientific">Cyanidioschyzon merolae (strain NIES-3377 / 10D)</name>
    <name type="common">Unicellular red alga</name>
    <dbReference type="NCBI Taxonomy" id="280699"/>
    <lineage>
        <taxon>Eukaryota</taxon>
        <taxon>Rhodophyta</taxon>
        <taxon>Bangiophyceae</taxon>
        <taxon>Cyanidiales</taxon>
        <taxon>Cyanidiaceae</taxon>
        <taxon>Cyanidioschyzon</taxon>
    </lineage>
</organism>
<sequence>MAKSSVKEREKKREQLIKRYEKKRKEIKQQIIEASTLKQKWQAYEKLSQLPKDSSPVRQRRRCWLTGRSRGVYRYFGLCRHMVRKMAHEGLLAGVTKSSW</sequence>
<accession>Q85FY5</accession>